<accession>Q9VAQ5</accession>
<sequence length="306" mass="35048">MPKVTKEKKSRIHNDVQKQGIVFNKDFGQHILKNPLVITTMLEKAALRATDVVLEIGPGTGNMTVRMLERAKKVIACEIDTRLAAELQKRVQATPLQPKLQVLIGDFLKAELPFFDLCIANVPYQISSPLIFKLLLHRPLFRCAVLMFQREFAERLVAKPGDKLYCRLSINTQLLARVDMLMKVGKNNFRPPPKVESSVVRLEPKNPPPPVNFTEWDGLTRIAFLRKNKTLAATFKVTSVLEMLEKNYKLYRSLRNEPIEDDFKMQDKVISILEEQDMAAKRARSMDIDDFMRLLLAFNSAGIHFN</sequence>
<keyword id="KW-0489">Methyltransferase</keyword>
<keyword id="KW-0539">Nucleus</keyword>
<keyword id="KW-1185">Reference proteome</keyword>
<keyword id="KW-0694">RNA-binding</keyword>
<keyword id="KW-0698">rRNA processing</keyword>
<keyword id="KW-0949">S-adenosyl-L-methionine</keyword>
<keyword id="KW-0808">Transferase</keyword>
<reference key="1">
    <citation type="journal article" date="2000" name="Science">
        <title>The genome sequence of Drosophila melanogaster.</title>
        <authorList>
            <person name="Adams M.D."/>
            <person name="Celniker S.E."/>
            <person name="Holt R.A."/>
            <person name="Evans C.A."/>
            <person name="Gocayne J.D."/>
            <person name="Amanatides P.G."/>
            <person name="Scherer S.E."/>
            <person name="Li P.W."/>
            <person name="Hoskins R.A."/>
            <person name="Galle R.F."/>
            <person name="George R.A."/>
            <person name="Lewis S.E."/>
            <person name="Richards S."/>
            <person name="Ashburner M."/>
            <person name="Henderson S.N."/>
            <person name="Sutton G.G."/>
            <person name="Wortman J.R."/>
            <person name="Yandell M.D."/>
            <person name="Zhang Q."/>
            <person name="Chen L.X."/>
            <person name="Brandon R.C."/>
            <person name="Rogers Y.-H.C."/>
            <person name="Blazej R.G."/>
            <person name="Champe M."/>
            <person name="Pfeiffer B.D."/>
            <person name="Wan K.H."/>
            <person name="Doyle C."/>
            <person name="Baxter E.G."/>
            <person name="Helt G."/>
            <person name="Nelson C.R."/>
            <person name="Miklos G.L.G."/>
            <person name="Abril J.F."/>
            <person name="Agbayani A."/>
            <person name="An H.-J."/>
            <person name="Andrews-Pfannkoch C."/>
            <person name="Baldwin D."/>
            <person name="Ballew R.M."/>
            <person name="Basu A."/>
            <person name="Baxendale J."/>
            <person name="Bayraktaroglu L."/>
            <person name="Beasley E.M."/>
            <person name="Beeson K.Y."/>
            <person name="Benos P.V."/>
            <person name="Berman B.P."/>
            <person name="Bhandari D."/>
            <person name="Bolshakov S."/>
            <person name="Borkova D."/>
            <person name="Botchan M.R."/>
            <person name="Bouck J."/>
            <person name="Brokstein P."/>
            <person name="Brottier P."/>
            <person name="Burtis K.C."/>
            <person name="Busam D.A."/>
            <person name="Butler H."/>
            <person name="Cadieu E."/>
            <person name="Center A."/>
            <person name="Chandra I."/>
            <person name="Cherry J.M."/>
            <person name="Cawley S."/>
            <person name="Dahlke C."/>
            <person name="Davenport L.B."/>
            <person name="Davies P."/>
            <person name="de Pablos B."/>
            <person name="Delcher A."/>
            <person name="Deng Z."/>
            <person name="Mays A.D."/>
            <person name="Dew I."/>
            <person name="Dietz S.M."/>
            <person name="Dodson K."/>
            <person name="Doup L.E."/>
            <person name="Downes M."/>
            <person name="Dugan-Rocha S."/>
            <person name="Dunkov B.C."/>
            <person name="Dunn P."/>
            <person name="Durbin K.J."/>
            <person name="Evangelista C.C."/>
            <person name="Ferraz C."/>
            <person name="Ferriera S."/>
            <person name="Fleischmann W."/>
            <person name="Fosler C."/>
            <person name="Gabrielian A.E."/>
            <person name="Garg N.S."/>
            <person name="Gelbart W.M."/>
            <person name="Glasser K."/>
            <person name="Glodek A."/>
            <person name="Gong F."/>
            <person name="Gorrell J.H."/>
            <person name="Gu Z."/>
            <person name="Guan P."/>
            <person name="Harris M."/>
            <person name="Harris N.L."/>
            <person name="Harvey D.A."/>
            <person name="Heiman T.J."/>
            <person name="Hernandez J.R."/>
            <person name="Houck J."/>
            <person name="Hostin D."/>
            <person name="Houston K.A."/>
            <person name="Howland T.J."/>
            <person name="Wei M.-H."/>
            <person name="Ibegwam C."/>
            <person name="Jalali M."/>
            <person name="Kalush F."/>
            <person name="Karpen G.H."/>
            <person name="Ke Z."/>
            <person name="Kennison J.A."/>
            <person name="Ketchum K.A."/>
            <person name="Kimmel B.E."/>
            <person name="Kodira C.D."/>
            <person name="Kraft C.L."/>
            <person name="Kravitz S."/>
            <person name="Kulp D."/>
            <person name="Lai Z."/>
            <person name="Lasko P."/>
            <person name="Lei Y."/>
            <person name="Levitsky A.A."/>
            <person name="Li J.H."/>
            <person name="Li Z."/>
            <person name="Liang Y."/>
            <person name="Lin X."/>
            <person name="Liu X."/>
            <person name="Mattei B."/>
            <person name="McIntosh T.C."/>
            <person name="McLeod M.P."/>
            <person name="McPherson D."/>
            <person name="Merkulov G."/>
            <person name="Milshina N.V."/>
            <person name="Mobarry C."/>
            <person name="Morris J."/>
            <person name="Moshrefi A."/>
            <person name="Mount S.M."/>
            <person name="Moy M."/>
            <person name="Murphy B."/>
            <person name="Murphy L."/>
            <person name="Muzny D.M."/>
            <person name="Nelson D.L."/>
            <person name="Nelson D.R."/>
            <person name="Nelson K.A."/>
            <person name="Nixon K."/>
            <person name="Nusskern D.R."/>
            <person name="Pacleb J.M."/>
            <person name="Palazzolo M."/>
            <person name="Pittman G.S."/>
            <person name="Pan S."/>
            <person name="Pollard J."/>
            <person name="Puri V."/>
            <person name="Reese M.G."/>
            <person name="Reinert K."/>
            <person name="Remington K."/>
            <person name="Saunders R.D.C."/>
            <person name="Scheeler F."/>
            <person name="Shen H."/>
            <person name="Shue B.C."/>
            <person name="Siden-Kiamos I."/>
            <person name="Simpson M."/>
            <person name="Skupski M.P."/>
            <person name="Smith T.J."/>
            <person name="Spier E."/>
            <person name="Spradling A.C."/>
            <person name="Stapleton M."/>
            <person name="Strong R."/>
            <person name="Sun E."/>
            <person name="Svirskas R."/>
            <person name="Tector C."/>
            <person name="Turner R."/>
            <person name="Venter E."/>
            <person name="Wang A.H."/>
            <person name="Wang X."/>
            <person name="Wang Z.-Y."/>
            <person name="Wassarman D.A."/>
            <person name="Weinstock G.M."/>
            <person name="Weissenbach J."/>
            <person name="Williams S.M."/>
            <person name="Woodage T."/>
            <person name="Worley K.C."/>
            <person name="Wu D."/>
            <person name="Yang S."/>
            <person name="Yao Q.A."/>
            <person name="Ye J."/>
            <person name="Yeh R.-F."/>
            <person name="Zaveri J.S."/>
            <person name="Zhan M."/>
            <person name="Zhang G."/>
            <person name="Zhao Q."/>
            <person name="Zheng L."/>
            <person name="Zheng X.H."/>
            <person name="Zhong F.N."/>
            <person name="Zhong W."/>
            <person name="Zhou X."/>
            <person name="Zhu S.C."/>
            <person name="Zhu X."/>
            <person name="Smith H.O."/>
            <person name="Gibbs R.A."/>
            <person name="Myers E.W."/>
            <person name="Rubin G.M."/>
            <person name="Venter J.C."/>
        </authorList>
    </citation>
    <scope>NUCLEOTIDE SEQUENCE [LARGE SCALE GENOMIC DNA]</scope>
    <source>
        <strain>Berkeley</strain>
    </source>
</reference>
<reference key="2">
    <citation type="journal article" date="2002" name="Genome Biol.">
        <title>Annotation of the Drosophila melanogaster euchromatic genome: a systematic review.</title>
        <authorList>
            <person name="Misra S."/>
            <person name="Crosby M.A."/>
            <person name="Mungall C.J."/>
            <person name="Matthews B.B."/>
            <person name="Campbell K.S."/>
            <person name="Hradecky P."/>
            <person name="Huang Y."/>
            <person name="Kaminker J.S."/>
            <person name="Millburn G.H."/>
            <person name="Prochnik S.E."/>
            <person name="Smith C.D."/>
            <person name="Tupy J.L."/>
            <person name="Whitfield E.J."/>
            <person name="Bayraktaroglu L."/>
            <person name="Berman B.P."/>
            <person name="Bettencourt B.R."/>
            <person name="Celniker S.E."/>
            <person name="de Grey A.D.N.J."/>
            <person name="Drysdale R.A."/>
            <person name="Harris N.L."/>
            <person name="Richter J."/>
            <person name="Russo S."/>
            <person name="Schroeder A.J."/>
            <person name="Shu S.Q."/>
            <person name="Stapleton M."/>
            <person name="Yamada C."/>
            <person name="Ashburner M."/>
            <person name="Gelbart W.M."/>
            <person name="Rubin G.M."/>
            <person name="Lewis S.E."/>
        </authorList>
    </citation>
    <scope>GENOME REANNOTATION</scope>
    <source>
        <strain>Berkeley</strain>
    </source>
</reference>
<reference key="3">
    <citation type="journal article" date="2002" name="Genome Biol.">
        <title>A Drosophila full-length cDNA resource.</title>
        <authorList>
            <person name="Stapleton M."/>
            <person name="Carlson J.W."/>
            <person name="Brokstein P."/>
            <person name="Yu C."/>
            <person name="Champe M."/>
            <person name="George R.A."/>
            <person name="Guarin H."/>
            <person name="Kronmiller B."/>
            <person name="Pacleb J.M."/>
            <person name="Park S."/>
            <person name="Wan K.H."/>
            <person name="Rubin G.M."/>
            <person name="Celniker S.E."/>
        </authorList>
    </citation>
    <scope>NUCLEOTIDE SEQUENCE [LARGE SCALE MRNA]</scope>
    <source>
        <strain>Berkeley</strain>
        <tissue>Embryo</tissue>
    </source>
</reference>
<evidence type="ECO:0000250" key="1"/>
<evidence type="ECO:0000250" key="2">
    <source>
        <dbReference type="UniProtKB" id="Q9UNQ2"/>
    </source>
</evidence>
<evidence type="ECO:0000255" key="3">
    <source>
        <dbReference type="PROSITE-ProRule" id="PRU01026"/>
    </source>
</evidence>
<dbReference type="EC" id="2.1.1.183"/>
<dbReference type="EMBL" id="AE014297">
    <property type="protein sequence ID" value="AAF56847.1"/>
    <property type="molecule type" value="Genomic_DNA"/>
</dbReference>
<dbReference type="EMBL" id="AY061429">
    <property type="protein sequence ID" value="AAL28977.1"/>
    <property type="molecule type" value="mRNA"/>
</dbReference>
<dbReference type="RefSeq" id="NP_651660.1">
    <property type="nucleotide sequence ID" value="NM_143403.4"/>
</dbReference>
<dbReference type="SMR" id="Q9VAQ5"/>
<dbReference type="BioGRID" id="68300">
    <property type="interactions" value="1"/>
</dbReference>
<dbReference type="FunCoup" id="Q9VAQ5">
    <property type="interactions" value="1032"/>
</dbReference>
<dbReference type="IntAct" id="Q9VAQ5">
    <property type="interactions" value="5"/>
</dbReference>
<dbReference type="STRING" id="7227.FBpp0084729"/>
<dbReference type="PaxDb" id="7227-FBpp0084729"/>
<dbReference type="DNASU" id="43429"/>
<dbReference type="EnsemblMetazoa" id="FBtr0085360">
    <property type="protein sequence ID" value="FBpp0084729"/>
    <property type="gene ID" value="FBgn0039627"/>
</dbReference>
<dbReference type="GeneID" id="43429"/>
<dbReference type="KEGG" id="dme:Dmel_CG11837"/>
<dbReference type="UCSC" id="CG11837-RA">
    <property type="organism name" value="d. melanogaster"/>
</dbReference>
<dbReference type="AGR" id="FB:FBgn0039627"/>
<dbReference type="FlyBase" id="FBgn0039627">
    <property type="gene designation" value="CG11837"/>
</dbReference>
<dbReference type="VEuPathDB" id="VectorBase:FBgn0039627"/>
<dbReference type="eggNOG" id="KOG0820">
    <property type="taxonomic scope" value="Eukaryota"/>
</dbReference>
<dbReference type="GeneTree" id="ENSGT00950000183142"/>
<dbReference type="HOGENOM" id="CLU_041220_2_3_1"/>
<dbReference type="InParanoid" id="Q9VAQ5"/>
<dbReference type="OMA" id="GMFQKEV"/>
<dbReference type="OrthoDB" id="74991at2759"/>
<dbReference type="PhylomeDB" id="Q9VAQ5"/>
<dbReference type="BioGRID-ORCS" id="43429">
    <property type="hits" value="0 hits in 1 CRISPR screen"/>
</dbReference>
<dbReference type="GenomeRNAi" id="43429"/>
<dbReference type="PRO" id="PR:Q9VAQ5"/>
<dbReference type="Proteomes" id="UP000000803">
    <property type="component" value="Chromosome 3R"/>
</dbReference>
<dbReference type="Bgee" id="FBgn0039627">
    <property type="expression patterns" value="Expressed in adult enteroendocrine precursor cell in adult midgut (Drosophila) and 36 other cell types or tissues"/>
</dbReference>
<dbReference type="GO" id="GO:0005730">
    <property type="term" value="C:nucleolus"/>
    <property type="evidence" value="ECO:0000318"/>
    <property type="project" value="GO_Central"/>
</dbReference>
<dbReference type="GO" id="GO:0032040">
    <property type="term" value="C:small-subunit processome"/>
    <property type="evidence" value="ECO:0000250"/>
    <property type="project" value="UniProtKB"/>
</dbReference>
<dbReference type="GO" id="GO:0052909">
    <property type="term" value="F:18S rRNA (adenine(1779)-N(6)/adenine(1780)-N(6))-dimethyltransferase activity"/>
    <property type="evidence" value="ECO:0000250"/>
    <property type="project" value="FlyBase"/>
</dbReference>
<dbReference type="GO" id="GO:0003723">
    <property type="term" value="F:RNA binding"/>
    <property type="evidence" value="ECO:0007669"/>
    <property type="project" value="UniProtKB-KW"/>
</dbReference>
<dbReference type="GO" id="GO:0000179">
    <property type="term" value="F:rRNA (adenine-N6,N6-)-dimethyltransferase activity"/>
    <property type="evidence" value="ECO:0000318"/>
    <property type="project" value="GO_Central"/>
</dbReference>
<dbReference type="GO" id="GO:0042274">
    <property type="term" value="P:ribosomal small subunit biogenesis"/>
    <property type="evidence" value="ECO:0000250"/>
    <property type="project" value="UniProtKB"/>
</dbReference>
<dbReference type="GO" id="GO:0031167">
    <property type="term" value="P:rRNA methylation"/>
    <property type="evidence" value="ECO:0000318"/>
    <property type="project" value="GO_Central"/>
</dbReference>
<dbReference type="CDD" id="cd02440">
    <property type="entry name" value="AdoMet_MTases"/>
    <property type="match status" value="1"/>
</dbReference>
<dbReference type="FunFam" id="1.10.8.480:FF:000002">
    <property type="entry name" value="rRNA adenine N(6)-methyltransferase"/>
    <property type="match status" value="1"/>
</dbReference>
<dbReference type="FunFam" id="3.40.50.150:FF:000007">
    <property type="entry name" value="rRNA adenine N(6)-methyltransferase"/>
    <property type="match status" value="1"/>
</dbReference>
<dbReference type="Gene3D" id="1.10.8.480">
    <property type="match status" value="1"/>
</dbReference>
<dbReference type="Gene3D" id="3.40.50.150">
    <property type="entry name" value="Vaccinia Virus protein VP39"/>
    <property type="match status" value="1"/>
</dbReference>
<dbReference type="InterPro" id="IPR001737">
    <property type="entry name" value="KsgA/Erm"/>
</dbReference>
<dbReference type="InterPro" id="IPR020596">
    <property type="entry name" value="rRNA_Ade_Mease_Trfase_CS"/>
</dbReference>
<dbReference type="InterPro" id="IPR020598">
    <property type="entry name" value="rRNA_Ade_methylase_Trfase_N"/>
</dbReference>
<dbReference type="InterPro" id="IPR011530">
    <property type="entry name" value="rRNA_adenine_dimethylase"/>
</dbReference>
<dbReference type="InterPro" id="IPR029063">
    <property type="entry name" value="SAM-dependent_MTases_sf"/>
</dbReference>
<dbReference type="NCBIfam" id="TIGR00755">
    <property type="entry name" value="ksgA"/>
    <property type="match status" value="1"/>
</dbReference>
<dbReference type="PANTHER" id="PTHR11727">
    <property type="entry name" value="DIMETHYLADENOSINE TRANSFERASE"/>
    <property type="match status" value="1"/>
</dbReference>
<dbReference type="PANTHER" id="PTHR11727:SF7">
    <property type="entry name" value="DIMETHYLADENOSINE TRANSFERASE-RELATED"/>
    <property type="match status" value="1"/>
</dbReference>
<dbReference type="Pfam" id="PF00398">
    <property type="entry name" value="RrnaAD"/>
    <property type="match status" value="1"/>
</dbReference>
<dbReference type="SMART" id="SM00650">
    <property type="entry name" value="rADc"/>
    <property type="match status" value="1"/>
</dbReference>
<dbReference type="SUPFAM" id="SSF53335">
    <property type="entry name" value="S-adenosyl-L-methionine-dependent methyltransferases"/>
    <property type="match status" value="1"/>
</dbReference>
<dbReference type="PROSITE" id="PS01131">
    <property type="entry name" value="RRNA_A_DIMETH"/>
    <property type="match status" value="1"/>
</dbReference>
<dbReference type="PROSITE" id="PS51689">
    <property type="entry name" value="SAM_RNA_A_N6_MT"/>
    <property type="match status" value="1"/>
</dbReference>
<protein>
    <recommendedName>
        <fullName>Probable dimethyladenosine transferase</fullName>
        <ecNumber>2.1.1.183</ecNumber>
    </recommendedName>
    <alternativeName>
        <fullName>Probable 18S rRNA (adenine(1779)-N(6)/adenine(1780)-N(6))-dimethyltransferase</fullName>
    </alternativeName>
    <alternativeName>
        <fullName>Probable 18S rRNA dimethylase</fullName>
    </alternativeName>
    <alternativeName>
        <fullName>Probable S-adenosylmethionine-6-N',N'-adenosyl(rRNA) dimethyltransferase</fullName>
    </alternativeName>
</protein>
<comment type="function">
    <text evidence="2">Specifically dimethylates two adjacent adenosines in the loop of a conserved hairpin near the 3'-end of 18S rRNA in the 40S particle. Involved in the pre-rRNA processing steps leading to small-subunit rRNA production independently of its RNA-modifying catalytic activity. Part of the small subunit (SSU) processome, first precursor of the small eukaryotic ribosomal subunit. During the assembly of the SSU processome in the nucleolus, many ribosome biogenesis factors, an RNA chaperone and ribosomal proteins associate with the nascent pre-rRNA and work in concert to generate RNA folding, modifications, rearrangements and cleavage as well as targeted degradation of pre-ribosomal RNA by the RNA exosome.</text>
</comment>
<comment type="catalytic activity">
    <reaction>
        <text>adenosine(1779)/adenosine(1780) in 18S rRNA + 4 S-adenosyl-L-methionine = N(6)-dimethyladenosine(1779)/N(6)-dimethyladenosine(1780) in 18S rRNA + 4 S-adenosyl-L-homocysteine + 4 H(+)</text>
        <dbReference type="Rhea" id="RHEA:42780"/>
        <dbReference type="Rhea" id="RHEA-COMP:10234"/>
        <dbReference type="Rhea" id="RHEA-COMP:10236"/>
        <dbReference type="ChEBI" id="CHEBI:15378"/>
        <dbReference type="ChEBI" id="CHEBI:57856"/>
        <dbReference type="ChEBI" id="CHEBI:59789"/>
        <dbReference type="ChEBI" id="CHEBI:74411"/>
        <dbReference type="ChEBI" id="CHEBI:74493"/>
        <dbReference type="EC" id="2.1.1.183"/>
    </reaction>
</comment>
<comment type="subunit">
    <text evidence="2">Part of the small subunit (SSU) processome, composed of more than 70 proteins and the RNA chaperone small nucleolar RNA (snoRNA) U3.</text>
</comment>
<comment type="subcellular location">
    <subcellularLocation>
        <location evidence="1">Nucleus</location>
        <location evidence="1">Nucleolus</location>
    </subcellularLocation>
</comment>
<comment type="similarity">
    <text evidence="3">Belongs to the class I-like SAM-binding methyltransferase superfamily. rRNA adenine N(6)-methyltransferase family.</text>
</comment>
<proteinExistence type="evidence at transcript level"/>
<organism>
    <name type="scientific">Drosophila melanogaster</name>
    <name type="common">Fruit fly</name>
    <dbReference type="NCBI Taxonomy" id="7227"/>
    <lineage>
        <taxon>Eukaryota</taxon>
        <taxon>Metazoa</taxon>
        <taxon>Ecdysozoa</taxon>
        <taxon>Arthropoda</taxon>
        <taxon>Hexapoda</taxon>
        <taxon>Insecta</taxon>
        <taxon>Pterygota</taxon>
        <taxon>Neoptera</taxon>
        <taxon>Endopterygota</taxon>
        <taxon>Diptera</taxon>
        <taxon>Brachycera</taxon>
        <taxon>Muscomorpha</taxon>
        <taxon>Ephydroidea</taxon>
        <taxon>Drosophilidae</taxon>
        <taxon>Drosophila</taxon>
        <taxon>Sophophora</taxon>
    </lineage>
</organism>
<feature type="chain" id="PRO_0000101469" description="Probable dimethyladenosine transferase">
    <location>
        <begin position="1"/>
        <end position="306"/>
    </location>
</feature>
<feature type="binding site" evidence="3">
    <location>
        <position position="30"/>
    </location>
    <ligand>
        <name>S-adenosyl-L-methionine</name>
        <dbReference type="ChEBI" id="CHEBI:59789"/>
    </ligand>
</feature>
<feature type="binding site" evidence="3">
    <location>
        <position position="32"/>
    </location>
    <ligand>
        <name>S-adenosyl-L-methionine</name>
        <dbReference type="ChEBI" id="CHEBI:59789"/>
    </ligand>
</feature>
<feature type="binding site" evidence="3">
    <location>
        <position position="57"/>
    </location>
    <ligand>
        <name>S-adenosyl-L-methionine</name>
        <dbReference type="ChEBI" id="CHEBI:59789"/>
    </ligand>
</feature>
<feature type="binding site" evidence="3">
    <location>
        <position position="78"/>
    </location>
    <ligand>
        <name>S-adenosyl-L-methionine</name>
        <dbReference type="ChEBI" id="CHEBI:59789"/>
    </ligand>
</feature>
<feature type="binding site" evidence="3">
    <location>
        <position position="106"/>
    </location>
    <ligand>
        <name>S-adenosyl-L-methionine</name>
        <dbReference type="ChEBI" id="CHEBI:59789"/>
    </ligand>
</feature>
<feature type="binding site" evidence="3">
    <location>
        <position position="121"/>
    </location>
    <ligand>
        <name>S-adenosyl-L-methionine</name>
        <dbReference type="ChEBI" id="CHEBI:59789"/>
    </ligand>
</feature>
<gene>
    <name type="ORF">CG11837</name>
</gene>
<name>DIM1_DROME</name>